<comment type="function">
    <text evidence="1">Transfers dimethylallyl groups to AMP as part of the biosynthesis of cytokinin phytohormones.</text>
</comment>
<comment type="catalytic activity">
    <reaction>
        <text>dimethylallyl diphosphate + AMP = N(6)-(dimethylallyl)adenosine 5'-phosphate + diphosphate</text>
        <dbReference type="Rhea" id="RHEA:15285"/>
        <dbReference type="ChEBI" id="CHEBI:33019"/>
        <dbReference type="ChEBI" id="CHEBI:57526"/>
        <dbReference type="ChEBI" id="CHEBI:57623"/>
        <dbReference type="ChEBI" id="CHEBI:456215"/>
        <dbReference type="EC" id="2.5.1.27"/>
    </reaction>
</comment>
<comment type="similarity">
    <text evidence="2">Belongs to the isopentenyl transferase family.</text>
</comment>
<name>IPT_RHIRD</name>
<organism>
    <name type="scientific">Rhizobium radiobacter</name>
    <name type="common">Agrobacterium tumefaciens</name>
    <name type="synonym">Agrobacterium radiobacter</name>
    <dbReference type="NCBI Taxonomy" id="358"/>
    <lineage>
        <taxon>Bacteria</taxon>
        <taxon>Pseudomonadati</taxon>
        <taxon>Pseudomonadota</taxon>
        <taxon>Alphaproteobacteria</taxon>
        <taxon>Hyphomicrobiales</taxon>
        <taxon>Rhizobiaceae</taxon>
        <taxon>Rhizobium/Agrobacterium group</taxon>
        <taxon>Agrobacterium</taxon>
        <taxon>Agrobacterium tumefaciens complex</taxon>
    </lineage>
</organism>
<feature type="chain" id="PRO_0000216430" description="Adenylate dimethylallyltransferase">
    <location>
        <begin position="1"/>
        <end position="239"/>
    </location>
</feature>
<keyword id="KW-0192">Crown gall tumor</keyword>
<keyword id="KW-0203">Cytokinin biosynthesis</keyword>
<keyword id="KW-0614">Plasmid</keyword>
<keyword id="KW-0808">Transferase</keyword>
<accession>P15653</accession>
<geneLocation type="plasmid">
    <name>pTiBo542</name>
</geneLocation>
<sequence>MDLRLIFGPTCTGKTSTAIALAQQTGLPVLSLDRVQCCPQLSTGSGRPTVEELKGTTRLYLDDRPLVKGIITAKQAHERLIAEVHNHEAKGGLILEGGSISLLRCMAQSRYWNADFRWHIIRNELADEESFMSVAKTRVKQMLRPSAGLSIIQELVQLWREPRLRPILEGIDGYRYALLFATQNQITPDMLLQLDADMENKLIHGIAQEFLIHARRQEQKFPLVGATAVEAFEGPPFRM</sequence>
<gene>
    <name type="primary">ipt</name>
</gene>
<reference key="1">
    <citation type="journal article" date="1989" name="Mol. Gen. Genet.">
        <title>Isolation and characterization of an ipt gene from the Ti plasmid Bo542.</title>
        <authorList>
            <person name="Strabala T.J."/>
            <person name="Bednarek S.Y."/>
            <person name="Bertoni G."/>
            <person name="Amasino R."/>
        </authorList>
    </citation>
    <scope>NUCLEOTIDE SEQUENCE [GENOMIC DNA]</scope>
    <source>
        <strain>Bo542</strain>
    </source>
</reference>
<proteinExistence type="inferred from homology"/>
<protein>
    <recommendedName>
        <fullName>Adenylate dimethylallyltransferase</fullName>
        <ecNumber>2.5.1.27</ecNumber>
    </recommendedName>
    <alternativeName>
        <fullName>Dimethylallyl transferase</fullName>
    </alternativeName>
    <alternativeName>
        <fullName>Isopentenyl transferase</fullName>
    </alternativeName>
</protein>
<evidence type="ECO:0000250" key="1"/>
<evidence type="ECO:0000305" key="2"/>
<dbReference type="EC" id="2.5.1.27"/>
<dbReference type="EMBL" id="X14410">
    <property type="protein sequence ID" value="CAA32582.1"/>
    <property type="molecule type" value="Genomic_DNA"/>
</dbReference>
<dbReference type="PIR" id="S04421">
    <property type="entry name" value="JJAGBT"/>
</dbReference>
<dbReference type="SMR" id="P15653"/>
<dbReference type="GO" id="GO:0009824">
    <property type="term" value="F:AMP dimethylallyltransferase activity"/>
    <property type="evidence" value="ECO:0007669"/>
    <property type="project" value="UniProtKB-EC"/>
</dbReference>
<dbReference type="GO" id="GO:0009691">
    <property type="term" value="P:cytokinin biosynthetic process"/>
    <property type="evidence" value="ECO:0007669"/>
    <property type="project" value="UniProtKB-KW"/>
</dbReference>
<dbReference type="Gene3D" id="1.10.287.890">
    <property type="entry name" value="Crystal structure of tRNA isopentenylpyrophosphate transferase (bh2366) domain"/>
    <property type="match status" value="1"/>
</dbReference>
<dbReference type="Gene3D" id="3.40.50.300">
    <property type="entry name" value="P-loop containing nucleotide triphosphate hydrolases"/>
    <property type="match status" value="1"/>
</dbReference>
<dbReference type="InterPro" id="IPR027417">
    <property type="entry name" value="P-loop_NTPase"/>
</dbReference>
<dbReference type="InterPro" id="IPR002648">
    <property type="entry name" value="Tzs"/>
</dbReference>
<dbReference type="Pfam" id="PF01745">
    <property type="entry name" value="IPT"/>
    <property type="match status" value="1"/>
</dbReference>
<dbReference type="PIRSF" id="PIRSF000507">
    <property type="entry name" value="IPT"/>
    <property type="match status" value="1"/>
</dbReference>
<dbReference type="SUPFAM" id="SSF52540">
    <property type="entry name" value="P-loop containing nucleoside triphosphate hydrolases"/>
    <property type="match status" value="1"/>
</dbReference>